<gene>
    <name evidence="1" type="primary">dnaA</name>
    <name type="ordered locus">ABBFA_000001</name>
</gene>
<organism>
    <name type="scientific">Acinetobacter baumannii (strain AB307-0294)</name>
    <dbReference type="NCBI Taxonomy" id="557600"/>
    <lineage>
        <taxon>Bacteria</taxon>
        <taxon>Pseudomonadati</taxon>
        <taxon>Pseudomonadota</taxon>
        <taxon>Gammaproteobacteria</taxon>
        <taxon>Moraxellales</taxon>
        <taxon>Moraxellaceae</taxon>
        <taxon>Acinetobacter</taxon>
        <taxon>Acinetobacter calcoaceticus/baumannii complex</taxon>
    </lineage>
</organism>
<accession>B7GUX5</accession>
<comment type="function">
    <text evidence="1">Plays an essential role in the initiation and regulation of chromosomal replication. ATP-DnaA binds to the origin of replication (oriC) to initiate formation of the DNA replication initiation complex once per cell cycle. Binds the DnaA box (a 9 base pair repeat at the origin) and separates the double-stranded (ds)DNA. Forms a right-handed helical filament on oriC DNA; dsDNA binds to the exterior of the filament while single-stranded (ss)DNA is stabiized in the filament's interior. The ATP-DnaA-oriC complex binds and stabilizes one strand of the AT-rich DNA unwinding element (DUE), permitting loading of DNA polymerase. After initiation quickly degrades to an ADP-DnaA complex that is not apt for DNA replication. Binds acidic phospholipids.</text>
</comment>
<comment type="subunit">
    <text evidence="1">Oligomerizes as a right-handed, spiral filament on DNA at oriC.</text>
</comment>
<comment type="subcellular location">
    <subcellularLocation>
        <location evidence="1">Cytoplasm</location>
    </subcellularLocation>
</comment>
<comment type="domain">
    <text evidence="1">Domain I is involved in oligomerization and binding regulators, domain II is flexibile and of varying length in different bacteria, domain III forms the AAA+ region, while domain IV binds dsDNA.</text>
</comment>
<comment type="similarity">
    <text evidence="1">Belongs to the DnaA family.</text>
</comment>
<name>DNAA_ACIB3</name>
<proteinExistence type="inferred from homology"/>
<sequence>MLWTDCLTRLRQELSDNVFAMWIRPLVAEEVEGILRLYAPNPYWTRYIQENHLELISILAEQLSEGRVRQVEILVDSRPGSILSSSEQPATTTAALQTAPIPQPAKVKREPEPVANTAVSSKSSKKKLLNPQFTFSLFVEGRSNQMAAETCRKVLTQLGASQHNPLFLYGPTGLGKTHLMQAVGNALLQAKPNARVMYMTSESFVQDFVSSLQKGKVEEFKKNCRSLDLLLVDDIHLLAGKEASLVEFFYTFNALLDESKQIILTSDRYPKELTELDPRLVSRFSWGLSVGVEPPDIETRIEILLKKAENSGVDLPRNCALFIAQQVVANVRELEGALNKVVAISRFKGAPIDLDVVRESLKDVLAIRARTISVENIQRVVSEYFRIPLKELVGPKRTRIYARPRQLAMGLARELTGDSFPEIGMAFGGRDHSTVMHACEKVVSLREEDPIFDEDYKNLLRLLQS</sequence>
<reference key="1">
    <citation type="journal article" date="2008" name="J. Bacteriol.">
        <title>Comparative genome sequence analysis of multidrug-resistant Acinetobacter baumannii.</title>
        <authorList>
            <person name="Adams M.D."/>
            <person name="Goglin K."/>
            <person name="Molyneaux N."/>
            <person name="Hujer K.M."/>
            <person name="Lavender H."/>
            <person name="Jamison J.J."/>
            <person name="MacDonald I.J."/>
            <person name="Martin K.M."/>
            <person name="Russo T."/>
            <person name="Campagnari A.A."/>
            <person name="Hujer A.M."/>
            <person name="Bonomo R.A."/>
            <person name="Gill S.R."/>
        </authorList>
    </citation>
    <scope>NUCLEOTIDE SEQUENCE [LARGE SCALE GENOMIC DNA]</scope>
    <source>
        <strain>AB307-0294</strain>
    </source>
</reference>
<dbReference type="EMBL" id="CP001172">
    <property type="protein sequence ID" value="ACJ57485.1"/>
    <property type="molecule type" value="Genomic_DNA"/>
</dbReference>
<dbReference type="RefSeq" id="WP_000964768.1">
    <property type="nucleotide sequence ID" value="NZ_CP001172.1"/>
</dbReference>
<dbReference type="SMR" id="B7GUX5"/>
<dbReference type="GeneID" id="92891940"/>
<dbReference type="HOGENOM" id="CLU_026910_0_1_6"/>
<dbReference type="Proteomes" id="UP000006924">
    <property type="component" value="Chromosome"/>
</dbReference>
<dbReference type="GO" id="GO:0005737">
    <property type="term" value="C:cytoplasm"/>
    <property type="evidence" value="ECO:0007669"/>
    <property type="project" value="UniProtKB-SubCell"/>
</dbReference>
<dbReference type="GO" id="GO:0005886">
    <property type="term" value="C:plasma membrane"/>
    <property type="evidence" value="ECO:0007669"/>
    <property type="project" value="TreeGrafter"/>
</dbReference>
<dbReference type="GO" id="GO:0005524">
    <property type="term" value="F:ATP binding"/>
    <property type="evidence" value="ECO:0007669"/>
    <property type="project" value="UniProtKB-UniRule"/>
</dbReference>
<dbReference type="GO" id="GO:0016887">
    <property type="term" value="F:ATP hydrolysis activity"/>
    <property type="evidence" value="ECO:0007669"/>
    <property type="project" value="InterPro"/>
</dbReference>
<dbReference type="GO" id="GO:0003688">
    <property type="term" value="F:DNA replication origin binding"/>
    <property type="evidence" value="ECO:0007669"/>
    <property type="project" value="UniProtKB-UniRule"/>
</dbReference>
<dbReference type="GO" id="GO:0008289">
    <property type="term" value="F:lipid binding"/>
    <property type="evidence" value="ECO:0007669"/>
    <property type="project" value="UniProtKB-KW"/>
</dbReference>
<dbReference type="GO" id="GO:0006270">
    <property type="term" value="P:DNA replication initiation"/>
    <property type="evidence" value="ECO:0007669"/>
    <property type="project" value="UniProtKB-UniRule"/>
</dbReference>
<dbReference type="GO" id="GO:0006275">
    <property type="term" value="P:regulation of DNA replication"/>
    <property type="evidence" value="ECO:0007669"/>
    <property type="project" value="UniProtKB-UniRule"/>
</dbReference>
<dbReference type="CDD" id="cd00009">
    <property type="entry name" value="AAA"/>
    <property type="match status" value="1"/>
</dbReference>
<dbReference type="CDD" id="cd06571">
    <property type="entry name" value="Bac_DnaA_C"/>
    <property type="match status" value="1"/>
</dbReference>
<dbReference type="FunFam" id="1.10.8.60:FF:000003">
    <property type="entry name" value="Chromosomal replication initiator protein DnaA"/>
    <property type="match status" value="1"/>
</dbReference>
<dbReference type="FunFam" id="3.40.50.300:FF:000668">
    <property type="entry name" value="Chromosomal replication initiator protein DnaA"/>
    <property type="match status" value="1"/>
</dbReference>
<dbReference type="Gene3D" id="1.10.1750.10">
    <property type="match status" value="1"/>
</dbReference>
<dbReference type="Gene3D" id="1.10.8.60">
    <property type="match status" value="1"/>
</dbReference>
<dbReference type="Gene3D" id="3.30.300.180">
    <property type="match status" value="1"/>
</dbReference>
<dbReference type="Gene3D" id="3.40.50.300">
    <property type="entry name" value="P-loop containing nucleotide triphosphate hydrolases"/>
    <property type="match status" value="1"/>
</dbReference>
<dbReference type="HAMAP" id="MF_00377">
    <property type="entry name" value="DnaA_bact"/>
    <property type="match status" value="1"/>
</dbReference>
<dbReference type="InterPro" id="IPR003593">
    <property type="entry name" value="AAA+_ATPase"/>
</dbReference>
<dbReference type="InterPro" id="IPR001957">
    <property type="entry name" value="Chromosome_initiator_DnaA"/>
</dbReference>
<dbReference type="InterPro" id="IPR020591">
    <property type="entry name" value="Chromosome_initiator_DnaA-like"/>
</dbReference>
<dbReference type="InterPro" id="IPR018312">
    <property type="entry name" value="Chromosome_initiator_DnaA_CS"/>
</dbReference>
<dbReference type="InterPro" id="IPR013159">
    <property type="entry name" value="DnaA_C"/>
</dbReference>
<dbReference type="InterPro" id="IPR013317">
    <property type="entry name" value="DnaA_dom"/>
</dbReference>
<dbReference type="InterPro" id="IPR024633">
    <property type="entry name" value="DnaA_N_dom"/>
</dbReference>
<dbReference type="InterPro" id="IPR038454">
    <property type="entry name" value="DnaA_N_sf"/>
</dbReference>
<dbReference type="InterPro" id="IPR027417">
    <property type="entry name" value="P-loop_NTPase"/>
</dbReference>
<dbReference type="InterPro" id="IPR010921">
    <property type="entry name" value="Trp_repressor/repl_initiator"/>
</dbReference>
<dbReference type="NCBIfam" id="TIGR00362">
    <property type="entry name" value="DnaA"/>
    <property type="match status" value="1"/>
</dbReference>
<dbReference type="PANTHER" id="PTHR30050">
    <property type="entry name" value="CHROMOSOMAL REPLICATION INITIATOR PROTEIN DNAA"/>
    <property type="match status" value="1"/>
</dbReference>
<dbReference type="PANTHER" id="PTHR30050:SF2">
    <property type="entry name" value="CHROMOSOMAL REPLICATION INITIATOR PROTEIN DNAA"/>
    <property type="match status" value="1"/>
</dbReference>
<dbReference type="Pfam" id="PF00308">
    <property type="entry name" value="Bac_DnaA"/>
    <property type="match status" value="1"/>
</dbReference>
<dbReference type="Pfam" id="PF08299">
    <property type="entry name" value="Bac_DnaA_C"/>
    <property type="match status" value="1"/>
</dbReference>
<dbReference type="Pfam" id="PF11638">
    <property type="entry name" value="DnaA_N"/>
    <property type="match status" value="1"/>
</dbReference>
<dbReference type="PRINTS" id="PR00051">
    <property type="entry name" value="DNAA"/>
</dbReference>
<dbReference type="SMART" id="SM00382">
    <property type="entry name" value="AAA"/>
    <property type="match status" value="1"/>
</dbReference>
<dbReference type="SMART" id="SM00760">
    <property type="entry name" value="Bac_DnaA_C"/>
    <property type="match status" value="1"/>
</dbReference>
<dbReference type="SUPFAM" id="SSF52540">
    <property type="entry name" value="P-loop containing nucleoside triphosphate hydrolases"/>
    <property type="match status" value="1"/>
</dbReference>
<dbReference type="SUPFAM" id="SSF48295">
    <property type="entry name" value="TrpR-like"/>
    <property type="match status" value="1"/>
</dbReference>
<dbReference type="PROSITE" id="PS01008">
    <property type="entry name" value="DNAA"/>
    <property type="match status" value="1"/>
</dbReference>
<feature type="chain" id="PRO_1000121936" description="Chromosomal replication initiator protein DnaA">
    <location>
        <begin position="1"/>
        <end position="465"/>
    </location>
</feature>
<feature type="region of interest" description="Domain I, interacts with DnaA modulators" evidence="1">
    <location>
        <begin position="1"/>
        <end position="87"/>
    </location>
</feature>
<feature type="region of interest" description="Disordered" evidence="2">
    <location>
        <begin position="81"/>
        <end position="123"/>
    </location>
</feature>
<feature type="region of interest" description="Domain II" evidence="1">
    <location>
        <begin position="88"/>
        <end position="127"/>
    </location>
</feature>
<feature type="region of interest" description="Domain III, AAA+ region" evidence="1">
    <location>
        <begin position="128"/>
        <end position="345"/>
    </location>
</feature>
<feature type="region of interest" description="Domain IV, binds dsDNA" evidence="1">
    <location>
        <begin position="346"/>
        <end position="465"/>
    </location>
</feature>
<feature type="compositionally biased region" description="Low complexity" evidence="2">
    <location>
        <begin position="88"/>
        <end position="100"/>
    </location>
</feature>
<feature type="binding site" evidence="1">
    <location>
        <position position="173"/>
    </location>
    <ligand>
        <name>ATP</name>
        <dbReference type="ChEBI" id="CHEBI:30616"/>
    </ligand>
</feature>
<feature type="binding site" evidence="1">
    <location>
        <position position="175"/>
    </location>
    <ligand>
        <name>ATP</name>
        <dbReference type="ChEBI" id="CHEBI:30616"/>
    </ligand>
</feature>
<feature type="binding site" evidence="1">
    <location>
        <position position="176"/>
    </location>
    <ligand>
        <name>ATP</name>
        <dbReference type="ChEBI" id="CHEBI:30616"/>
    </ligand>
</feature>
<feature type="binding site" evidence="1">
    <location>
        <position position="177"/>
    </location>
    <ligand>
        <name>ATP</name>
        <dbReference type="ChEBI" id="CHEBI:30616"/>
    </ligand>
</feature>
<evidence type="ECO:0000255" key="1">
    <source>
        <dbReference type="HAMAP-Rule" id="MF_00377"/>
    </source>
</evidence>
<evidence type="ECO:0000256" key="2">
    <source>
        <dbReference type="SAM" id="MobiDB-lite"/>
    </source>
</evidence>
<protein>
    <recommendedName>
        <fullName evidence="1">Chromosomal replication initiator protein DnaA</fullName>
    </recommendedName>
</protein>
<keyword id="KW-0067">ATP-binding</keyword>
<keyword id="KW-0963">Cytoplasm</keyword>
<keyword id="KW-0235">DNA replication</keyword>
<keyword id="KW-0238">DNA-binding</keyword>
<keyword id="KW-0446">Lipid-binding</keyword>
<keyword id="KW-0547">Nucleotide-binding</keyword>